<reference key="1">
    <citation type="journal article" date="2011" name="J. Exp. Biol.">
        <title>A diverse family of novel peptide toxins from an unusual cone snail, Conus californicus.</title>
        <authorList>
            <person name="Gilly W.F."/>
            <person name="Richmond T.A."/>
            <person name="Duda T.F. Jr."/>
            <person name="Elliger C."/>
            <person name="Lebaric Z."/>
            <person name="Schulz J."/>
            <person name="Bingham J.P."/>
            <person name="Sweedler J.V."/>
        </authorList>
    </citation>
    <scope>NUCLEOTIDE SEQUENCE [MRNA]</scope>
    <source>
        <tissue>Venom duct</tissue>
    </source>
</reference>
<evidence type="ECO:0000250" key="1"/>
<evidence type="ECO:0000305" key="2"/>
<dbReference type="EMBL" id="EF644188">
    <property type="protein sequence ID" value="ABR92958.1"/>
    <property type="molecule type" value="mRNA"/>
</dbReference>
<dbReference type="ConoServer" id="807">
    <property type="toxin name" value="Cal12.1.2f"/>
</dbReference>
<dbReference type="GO" id="GO:0005576">
    <property type="term" value="C:extracellular region"/>
    <property type="evidence" value="ECO:0007669"/>
    <property type="project" value="UniProtKB-SubCell"/>
</dbReference>
<dbReference type="GO" id="GO:0099106">
    <property type="term" value="F:ion channel regulator activity"/>
    <property type="evidence" value="ECO:0007669"/>
    <property type="project" value="UniProtKB-KW"/>
</dbReference>
<dbReference type="GO" id="GO:0090729">
    <property type="term" value="F:toxin activity"/>
    <property type="evidence" value="ECO:0007669"/>
    <property type="project" value="UniProtKB-KW"/>
</dbReference>
<name>COC2F_CONCL</name>
<feature type="peptide" id="PRO_0000392274" description="Mu-conotoxin-like Cal 12.1.2f">
    <location>
        <begin position="1"/>
        <end position="44"/>
    </location>
</feature>
<feature type="modified residue" description="6'-bromotryptophan" evidence="1">
    <location>
        <position position="16"/>
    </location>
</feature>
<feature type="modified residue" description="4-hydroxyproline" evidence="1">
    <location>
        <position position="22"/>
    </location>
</feature>
<feature type="modified residue" description="6'-bromotryptophan" evidence="1">
    <location>
        <position position="36"/>
    </location>
</feature>
<feature type="modified residue" description="6'-bromotryptophan" evidence="1">
    <location>
        <position position="37"/>
    </location>
</feature>
<feature type="modified residue" description="4-hydroxyproline" evidence="1">
    <location>
        <position position="39"/>
    </location>
</feature>
<feature type="modified residue" description="6'-bromotryptophan" evidence="1">
    <location>
        <position position="43"/>
    </location>
</feature>
<feature type="disulfide bond" evidence="2">
    <location>
        <begin position="3"/>
        <end position="15"/>
    </location>
</feature>
<feature type="disulfide bond" evidence="1">
    <location>
        <begin position="10"/>
        <end position="27"/>
    </location>
</feature>
<feature type="disulfide bond" evidence="1">
    <location>
        <begin position="17"/>
        <end position="32"/>
    </location>
</feature>
<feature type="disulfide bond" evidence="1">
    <location>
        <begin position="26"/>
        <end position="38"/>
    </location>
</feature>
<comment type="function">
    <text evidence="1">Mu-conotoxins block voltage-gated sodium channels. This toxin reversibly blocks voltage-gated sodium channel in cephalopods, with no alteration in the voltage dependence of sodium conductance or on the kinetics of inactivation (By similarity).</text>
</comment>
<comment type="subcellular location">
    <subcellularLocation>
        <location evidence="1">Secreted</location>
    </subcellularLocation>
</comment>
<comment type="tissue specificity">
    <text>Expressed by the venom duct.</text>
</comment>
<comment type="domain">
    <text>The cysteine framework is XII (C-C-C-C-CC-C-C).</text>
</comment>
<sequence>DVCESVAGRCIHNGCWCERSAPHGNCCNTSGCTARWWCPGTKWD</sequence>
<protein>
    <recommendedName>
        <fullName>Mu-conotoxin-like Cal 12.1.2f</fullName>
    </recommendedName>
    <alternativeName>
        <fullName>Conotoxin CalTx 12.1.3D</fullName>
    </alternativeName>
</protein>
<keyword id="KW-0102">Bromination</keyword>
<keyword id="KW-1015">Disulfide bond</keyword>
<keyword id="KW-0379">Hydroxylation</keyword>
<keyword id="KW-0872">Ion channel impairing toxin</keyword>
<keyword id="KW-0528">Neurotoxin</keyword>
<keyword id="KW-0964">Secreted</keyword>
<keyword id="KW-0800">Toxin</keyword>
<organism>
    <name type="scientific">Californiconus californicus</name>
    <name type="common">California cone</name>
    <name type="synonym">Conus californicus</name>
    <dbReference type="NCBI Taxonomy" id="1736779"/>
    <lineage>
        <taxon>Eukaryota</taxon>
        <taxon>Metazoa</taxon>
        <taxon>Spiralia</taxon>
        <taxon>Lophotrochozoa</taxon>
        <taxon>Mollusca</taxon>
        <taxon>Gastropoda</taxon>
        <taxon>Caenogastropoda</taxon>
        <taxon>Neogastropoda</taxon>
        <taxon>Conoidea</taxon>
        <taxon>Conidae</taxon>
        <taxon>Californiconus</taxon>
    </lineage>
</organism>
<proteinExistence type="evidence at transcript level"/>
<accession>A6YR34</accession>